<accession>G5EBU4</accession>
<sequence>MVDIAEAMPTTASSLPSDEALRKFKCPECTKAFKFKHHLKEHIRIHSGEKPFECQQCHKRFSHSGSYSSHMSSKKCVQQASPSMVTPFNPYQLMMYRNIMLQLQTPQVSFLPSTAANNMDYMSLLQANLFQSLENGTSPTPTQEPSAPASPEPKIEVVDEPEVSSEVKTEVKTEVKTEDSVPEESITPAVSMSLSPAPEQNGNESMNNGGSGSDGKSSPDWRPLRSRSFLNDSQVAVLQNHFKRNPFPSKYELSAVAEQIGVNKRVVQVWFQNTRAKERRSNRLPSMPRGSVASAAAAAATSPTVWQTPVQLMAAWASQFSNGNNSLTASQDERNNENTDEVMDHDGLKDGKETPLDLTLSTDDTEPEWSPEKLIGFLDQTGGVIQELLRQAGNGFVTNQEDEEEKPIKAEESPVSSGSSSIWPSFIGQYPSILDSASLSVLEKALDQQKSSEDDASSLCSNESKLLKFPTTPLKEEEGLFSCDQCDKVFGKQSSLARHKYEHSGQRPYKCDICEKAFKHKHHLTEHKRLHSGEKPFQCDKCLKRFSHSGSYSQHMNHRYSYCKPYREQPASPSDVLNGGSVTVSPSSSNTPPPST</sequence>
<dbReference type="EMBL" id="AY289599">
    <property type="protein sequence ID" value="AAP43944.1"/>
    <property type="molecule type" value="mRNA"/>
</dbReference>
<dbReference type="EMBL" id="AY224511">
    <property type="protein sequence ID" value="AAP37457.1"/>
    <property type="molecule type" value="mRNA"/>
</dbReference>
<dbReference type="EMBL" id="FO081249">
    <property type="protein sequence ID" value="CCD70186.1"/>
    <property type="molecule type" value="Genomic_DNA"/>
</dbReference>
<dbReference type="PIR" id="T29204">
    <property type="entry name" value="T29204"/>
</dbReference>
<dbReference type="RefSeq" id="NP_500424.3">
    <property type="nucleotide sequence ID" value="NM_068023.5"/>
</dbReference>
<dbReference type="SMR" id="G5EBU4"/>
<dbReference type="BioGRID" id="42283">
    <property type="interactions" value="1"/>
</dbReference>
<dbReference type="FunCoup" id="G5EBU4">
    <property type="interactions" value="1988"/>
</dbReference>
<dbReference type="IntAct" id="G5EBU4">
    <property type="interactions" value="1"/>
</dbReference>
<dbReference type="STRING" id="6239.F28F9.1.1"/>
<dbReference type="PaxDb" id="6239-F28F9.1"/>
<dbReference type="EnsemblMetazoa" id="F28F9.1.1">
    <property type="protein sequence ID" value="F28F9.1.1"/>
    <property type="gene ID" value="WBGene00006970"/>
</dbReference>
<dbReference type="GeneID" id="177144"/>
<dbReference type="KEGG" id="cel:CELE_F28F9.1"/>
<dbReference type="AGR" id="WB:WBGene00006970"/>
<dbReference type="CTD" id="177144"/>
<dbReference type="WormBase" id="F28F9.1">
    <property type="protein sequence ID" value="CE34546"/>
    <property type="gene ID" value="WBGene00006970"/>
    <property type="gene designation" value="zag-1"/>
</dbReference>
<dbReference type="eggNOG" id="KOG3623">
    <property type="taxonomic scope" value="Eukaryota"/>
</dbReference>
<dbReference type="GeneTree" id="ENSGT00870000136508"/>
<dbReference type="HOGENOM" id="CLU_464864_0_0_1"/>
<dbReference type="InParanoid" id="G5EBU4"/>
<dbReference type="OMA" id="PRAFKHK"/>
<dbReference type="OrthoDB" id="427030at2759"/>
<dbReference type="PhylomeDB" id="G5EBU4"/>
<dbReference type="PRO" id="PR:G5EBU4"/>
<dbReference type="Proteomes" id="UP000001940">
    <property type="component" value="Chromosome IV"/>
</dbReference>
<dbReference type="Bgee" id="WBGene00006970">
    <property type="expression patterns" value="Expressed in pharyngeal muscle cell (C elegans) and 3 other cell types or tissues"/>
</dbReference>
<dbReference type="GO" id="GO:0005634">
    <property type="term" value="C:nucleus"/>
    <property type="evidence" value="ECO:0000314"/>
    <property type="project" value="WormBase"/>
</dbReference>
<dbReference type="GO" id="GO:0000981">
    <property type="term" value="F:DNA-binding transcription factor activity, RNA polymerase II-specific"/>
    <property type="evidence" value="ECO:0000318"/>
    <property type="project" value="GO_Central"/>
</dbReference>
<dbReference type="GO" id="GO:0000978">
    <property type="term" value="F:RNA polymerase II cis-regulatory region sequence-specific DNA binding"/>
    <property type="evidence" value="ECO:0000318"/>
    <property type="project" value="GO_Central"/>
</dbReference>
<dbReference type="GO" id="GO:0008270">
    <property type="term" value="F:zinc ion binding"/>
    <property type="evidence" value="ECO:0007669"/>
    <property type="project" value="UniProtKB-KW"/>
</dbReference>
<dbReference type="GO" id="GO:0007411">
    <property type="term" value="P:axon guidance"/>
    <property type="evidence" value="ECO:0000315"/>
    <property type="project" value="WormBase"/>
</dbReference>
<dbReference type="GO" id="GO:0007417">
    <property type="term" value="P:central nervous system development"/>
    <property type="evidence" value="ECO:0000318"/>
    <property type="project" value="GO_Central"/>
</dbReference>
<dbReference type="GO" id="GO:0016358">
    <property type="term" value="P:dendrite development"/>
    <property type="evidence" value="ECO:0000315"/>
    <property type="project" value="UniProtKB"/>
</dbReference>
<dbReference type="GO" id="GO:0002164">
    <property type="term" value="P:larval development"/>
    <property type="evidence" value="ECO:0000315"/>
    <property type="project" value="UniProtKB"/>
</dbReference>
<dbReference type="GO" id="GO:0000122">
    <property type="term" value="P:negative regulation of transcription by RNA polymerase II"/>
    <property type="evidence" value="ECO:0000315"/>
    <property type="project" value="UniProtKB"/>
</dbReference>
<dbReference type="GO" id="GO:0048665">
    <property type="term" value="P:neuron fate specification"/>
    <property type="evidence" value="ECO:0000315"/>
    <property type="project" value="UniProtKB"/>
</dbReference>
<dbReference type="GO" id="GO:0045773">
    <property type="term" value="P:positive regulation of axon extension"/>
    <property type="evidence" value="ECO:0000315"/>
    <property type="project" value="WormBase"/>
</dbReference>
<dbReference type="GO" id="GO:0045664">
    <property type="term" value="P:regulation of neuron differentiation"/>
    <property type="evidence" value="ECO:0000315"/>
    <property type="project" value="UniProtKB"/>
</dbReference>
<dbReference type="GO" id="GO:0006357">
    <property type="term" value="P:regulation of transcription by RNA polymerase II"/>
    <property type="evidence" value="ECO:0000318"/>
    <property type="project" value="GO_Central"/>
</dbReference>
<dbReference type="CDD" id="cd00086">
    <property type="entry name" value="homeodomain"/>
    <property type="match status" value="1"/>
</dbReference>
<dbReference type="FunFam" id="3.30.160.60:FF:000013">
    <property type="entry name" value="Putative zinc finger E-box-binding homeobox 2"/>
    <property type="match status" value="2"/>
</dbReference>
<dbReference type="FunFam" id="3.30.160.60:FF:000744">
    <property type="entry name" value="zinc finger E-box-binding homeobox 1"/>
    <property type="match status" value="1"/>
</dbReference>
<dbReference type="FunFam" id="3.30.160.60:FF:000072">
    <property type="entry name" value="zinc finger protein 143 isoform X1"/>
    <property type="match status" value="1"/>
</dbReference>
<dbReference type="FunFam" id="3.30.160.60:FF:000145">
    <property type="entry name" value="Zinc finger protein 574"/>
    <property type="match status" value="1"/>
</dbReference>
<dbReference type="Gene3D" id="3.30.160.60">
    <property type="entry name" value="Classic Zinc Finger"/>
    <property type="match status" value="5"/>
</dbReference>
<dbReference type="Gene3D" id="1.10.10.60">
    <property type="entry name" value="Homeodomain-like"/>
    <property type="match status" value="1"/>
</dbReference>
<dbReference type="InterPro" id="IPR001356">
    <property type="entry name" value="HD"/>
</dbReference>
<dbReference type="InterPro" id="IPR017970">
    <property type="entry name" value="Homeobox_CS"/>
</dbReference>
<dbReference type="InterPro" id="IPR009057">
    <property type="entry name" value="Homeodomain-like_sf"/>
</dbReference>
<dbReference type="InterPro" id="IPR036236">
    <property type="entry name" value="Znf_C2H2_sf"/>
</dbReference>
<dbReference type="InterPro" id="IPR013087">
    <property type="entry name" value="Znf_C2H2_type"/>
</dbReference>
<dbReference type="InterPro" id="IPR051574">
    <property type="entry name" value="ZnF_E-box_Homeobox"/>
</dbReference>
<dbReference type="PANTHER" id="PTHR24391">
    <property type="entry name" value="HISTONE H4 TRANSCRIPTION FACTOR-RELATED"/>
    <property type="match status" value="1"/>
</dbReference>
<dbReference type="PANTHER" id="PTHR24391:SF27">
    <property type="entry name" value="ZINC FINGER PROTEIN 1"/>
    <property type="match status" value="1"/>
</dbReference>
<dbReference type="Pfam" id="PF00046">
    <property type="entry name" value="Homeodomain"/>
    <property type="match status" value="1"/>
</dbReference>
<dbReference type="Pfam" id="PF00096">
    <property type="entry name" value="zf-C2H2"/>
    <property type="match status" value="3"/>
</dbReference>
<dbReference type="SMART" id="SM00389">
    <property type="entry name" value="HOX"/>
    <property type="match status" value="1"/>
</dbReference>
<dbReference type="SMART" id="SM00355">
    <property type="entry name" value="ZnF_C2H2"/>
    <property type="match status" value="5"/>
</dbReference>
<dbReference type="SUPFAM" id="SSF57667">
    <property type="entry name" value="beta-beta-alpha zinc fingers"/>
    <property type="match status" value="3"/>
</dbReference>
<dbReference type="SUPFAM" id="SSF46689">
    <property type="entry name" value="Homeodomain-like"/>
    <property type="match status" value="1"/>
</dbReference>
<dbReference type="PROSITE" id="PS00027">
    <property type="entry name" value="HOMEOBOX_1"/>
    <property type="match status" value="1"/>
</dbReference>
<dbReference type="PROSITE" id="PS50071">
    <property type="entry name" value="HOMEOBOX_2"/>
    <property type="match status" value="1"/>
</dbReference>
<dbReference type="PROSITE" id="PS00028">
    <property type="entry name" value="ZINC_FINGER_C2H2_1"/>
    <property type="match status" value="3"/>
</dbReference>
<dbReference type="PROSITE" id="PS50157">
    <property type="entry name" value="ZINC_FINGER_C2H2_2"/>
    <property type="match status" value="4"/>
</dbReference>
<keyword id="KW-0217">Developmental protein</keyword>
<keyword id="KW-0238">DNA-binding</keyword>
<keyword id="KW-0371">Homeobox</keyword>
<keyword id="KW-0479">Metal-binding</keyword>
<keyword id="KW-0539">Nucleus</keyword>
<keyword id="KW-1185">Reference proteome</keyword>
<keyword id="KW-0677">Repeat</keyword>
<keyword id="KW-0678">Repressor</keyword>
<keyword id="KW-0804">Transcription</keyword>
<keyword id="KW-0805">Transcription regulation</keyword>
<keyword id="KW-0862">Zinc</keyword>
<keyword id="KW-0863">Zinc-finger</keyword>
<gene>
    <name evidence="12 13" type="primary">zag-1</name>
    <name type="ORF">F28F9.1</name>
</gene>
<protein>
    <recommendedName>
        <fullName>Zinc finger E-box-binding homeobox protein zag-1</fullName>
    </recommendedName>
    <alternativeName>
        <fullName evidence="8">Zinc finger involved in axon guidance 1</fullName>
        <shortName evidence="10">ZAG-1</shortName>
    </alternativeName>
</protein>
<feature type="chain" id="PRO_0000419767" description="Zinc finger E-box-binding homeobox protein zag-1">
    <location>
        <begin position="1"/>
        <end position="596"/>
    </location>
</feature>
<feature type="zinc finger region" description="C2H2-type 1" evidence="1">
    <location>
        <begin position="24"/>
        <end position="46"/>
    </location>
</feature>
<feature type="zinc finger region" description="C2H2-type 2; degenerate" evidence="1">
    <location>
        <begin position="52"/>
        <end position="72"/>
    </location>
</feature>
<feature type="DNA-binding region" description="Homeobox" evidence="2">
    <location>
        <begin position="223"/>
        <end position="282"/>
    </location>
</feature>
<feature type="zinc finger region" description="C2H2-type 3" evidence="1">
    <location>
        <begin position="481"/>
        <end position="503"/>
    </location>
</feature>
<feature type="zinc finger region" description="C2H2-type 4" evidence="1">
    <location>
        <begin position="509"/>
        <end position="531"/>
    </location>
</feature>
<feature type="zinc finger region" description="C2H2-type 5; degenerate" evidence="1">
    <location>
        <begin position="537"/>
        <end position="560"/>
    </location>
</feature>
<feature type="region of interest" description="Disordered" evidence="3">
    <location>
        <begin position="133"/>
        <end position="225"/>
    </location>
</feature>
<feature type="region of interest" description="Disordered" evidence="3">
    <location>
        <begin position="324"/>
        <end position="369"/>
    </location>
</feature>
<feature type="region of interest" description="Disordered" evidence="3">
    <location>
        <begin position="395"/>
        <end position="421"/>
    </location>
</feature>
<feature type="region of interest" description="Disordered" evidence="3">
    <location>
        <begin position="569"/>
        <end position="596"/>
    </location>
</feature>
<feature type="compositionally biased region" description="Polar residues" evidence="3">
    <location>
        <begin position="133"/>
        <end position="145"/>
    </location>
</feature>
<feature type="compositionally biased region" description="Basic and acidic residues" evidence="3">
    <location>
        <begin position="165"/>
        <end position="179"/>
    </location>
</feature>
<feature type="compositionally biased region" description="Polar residues" evidence="3">
    <location>
        <begin position="188"/>
        <end position="200"/>
    </location>
</feature>
<feature type="compositionally biased region" description="Low complexity" evidence="3">
    <location>
        <begin position="201"/>
        <end position="216"/>
    </location>
</feature>
<feature type="compositionally biased region" description="Basic and acidic residues" evidence="3">
    <location>
        <begin position="331"/>
        <end position="355"/>
    </location>
</feature>
<feature type="compositionally biased region" description="Low complexity" evidence="3">
    <location>
        <begin position="578"/>
        <end position="590"/>
    </location>
</feature>
<name>ZAG1_CAEEL</name>
<reference evidence="9 11" key="1">
    <citation type="journal article" date="2003" name="Development">
        <title>C. elegans ZAG-1, a Zn-finger-homeodomain protein, regulates axonal development and neuronal differentiation.</title>
        <authorList>
            <person name="Clark S.G."/>
            <person name="Chiu C."/>
        </authorList>
    </citation>
    <scope>NUCLEOTIDE SEQUENCE [MRNA]</scope>
    <scope>FUNCTION</scope>
    <scope>SUBCELLULAR LOCATION</scope>
    <scope>DEVELOPMENTAL STAGE</scope>
</reference>
<reference evidence="9 10" key="2">
    <citation type="journal article" date="2003" name="Development">
        <title>zag-1, a Zn-finger homeodomain transcription factor controlling neuronal differentiation and axon outgrowth in C. elegans.</title>
        <authorList>
            <person name="Wacker I."/>
            <person name="Schwarz V."/>
            <person name="Hedgecock E.M."/>
            <person name="Hutter H."/>
        </authorList>
    </citation>
    <scope>NUCLEOTIDE SEQUENCE [MRNA]</scope>
    <scope>FUNCTION</scope>
    <scope>DEVELOPMENTAL STAGE</scope>
    <scope>DISRUPTION PHENOTYPE</scope>
</reference>
<reference evidence="12" key="3">
    <citation type="journal article" date="1998" name="Science">
        <title>Genome sequence of the nematode C. elegans: a platform for investigating biology.</title>
        <authorList>
            <consortium name="The C. elegans sequencing consortium"/>
        </authorList>
    </citation>
    <scope>NUCLEOTIDE SEQUENCE [LARGE SCALE GENOMIC DNA]</scope>
    <source>
        <strain evidence="12">Bristol N2</strain>
    </source>
</reference>
<reference key="4">
    <citation type="journal article" date="2014" name="PLoS ONE">
        <title>Regulation of C. elegans neuronal differentiation by the ZEB-family factor ZAG-1 and the NK-2 homeodomain factor CEH-28.</title>
        <authorList>
            <person name="Ramakrishnan K."/>
            <person name="Okkema P.G."/>
        </authorList>
    </citation>
    <scope>FUNCTION</scope>
    <scope>TISSUE SPECIFICITY</scope>
</reference>
<reference key="5">
    <citation type="journal article" date="2018" name="Development">
        <title>Inhibition of cell fate repressors secures the differentiation of the touch receptor neurons of Caenorhabditis elegans.</title>
        <authorList>
            <person name="Zheng C."/>
            <person name="Jin F.Q."/>
            <person name="Trippe B.L."/>
            <person name="Wu J."/>
            <person name="Chalfie M."/>
        </authorList>
    </citation>
    <scope>FUNCTION</scope>
    <scope>TISSUE SPECIFICITY</scope>
    <scope>DISRUPTION PHENOTYPE</scope>
</reference>
<comment type="function">
    <text evidence="4 5 6 7">Transcription factor (PubMed:12835394, PubMed:12835395, PubMed:25474681, PubMed:30291162). Down-regulates expression of genes involved in either the synthesis or reuptake of serotonin, dopamine and GABA (PubMed:12835394). Acts as a transcriptional repressor to regulate multiple, discrete, neuron-specific aspects of terminal differentiation, including cell migration, axonal development and gene expression (PubMed:12835394, PubMed:12835395, PubMed:25474681, PubMed:30291162). Promotes touch receptor neuron differentiation by repressing the expression of egl-44 and egl-46 (PubMed:30291162). As egl-44 and egl-46, probably acting as a heterodimer, repress expression of zag-1 in FLP neurons, together these proteins form a bistable, negative-feedback loop that regulates the choice between neuronal fates (PubMed:30291162). Required for axon guidance (PubMed:12835395). Involved in the proper development of the pharynx (PubMed:12835395). Required for pharynx isthmus peristalsis, probably via a role in the differentiation of the M4 cholinergic motor neuron (PubMed:25474681). Directly represses its own transcription by interacting with conserved E-box sequence motifs 5'-CACCTG-3' in its own promoter (PubMed:12835394, PubMed:12835395). May also act as a transcriptional activator of the homeodomain ceh-28 (PubMed:25474681).</text>
</comment>
<comment type="subcellular location">
    <subcellularLocation>
        <location evidence="2 4">Nucleus</location>
    </subcellularLocation>
</comment>
<comment type="tissue specificity">
    <text evidence="6 7">Expressed in the six touch receptor neurons (TRNs) but not in the FLP and PVD neurons (PubMed:30291162). Expressed in the M4 cholinergic motor neuron (PubMed:25474681).</text>
</comment>
<comment type="developmental stage">
    <text evidence="4 5">Detected in a few nuclei in the embryonic head as the embryo reaches morphogenesis stage. Expressed in an increasing number of nuclei as embryonic development progresses such that by the 1.5-fold stage it is detected in a large number of neuronal cells in the head and a few cells in the pharynx. At the 1.5-fold stage, expression is also prominent in motorneurons in the ventral cord and in neurons in tail ganglia. This expression is maintained during the 3-fold stage, but is reduced to undetectable levels in most cells before hatching. By the L1/L2 stage, expression is detected transiently in postembryonic motorneurons.</text>
</comment>
<comment type="disruption phenotype">
    <text evidence="5 7">Worms exhibit a starved appearance, are unable to swallow food and die at the L1 larval stage (PubMed:12835395). RNAi-mediated knockdown causes significant reduction in expression of mec-17 (PubMed:30291162).</text>
</comment>
<evidence type="ECO:0000255" key="1">
    <source>
        <dbReference type="PROSITE-ProRule" id="PRU00042"/>
    </source>
</evidence>
<evidence type="ECO:0000255" key="2">
    <source>
        <dbReference type="PROSITE-ProRule" id="PRU00108"/>
    </source>
</evidence>
<evidence type="ECO:0000256" key="3">
    <source>
        <dbReference type="SAM" id="MobiDB-lite"/>
    </source>
</evidence>
<evidence type="ECO:0000269" key="4">
    <source>
    </source>
</evidence>
<evidence type="ECO:0000269" key="5">
    <source>
    </source>
</evidence>
<evidence type="ECO:0000269" key="6">
    <source>
    </source>
</evidence>
<evidence type="ECO:0000269" key="7">
    <source>
    </source>
</evidence>
<evidence type="ECO:0000303" key="8">
    <source>
    </source>
</evidence>
<evidence type="ECO:0000305" key="9"/>
<evidence type="ECO:0000312" key="10">
    <source>
        <dbReference type="EMBL" id="AAP37457.1"/>
    </source>
</evidence>
<evidence type="ECO:0000312" key="11">
    <source>
        <dbReference type="EMBL" id="AAP43944.1"/>
    </source>
</evidence>
<evidence type="ECO:0000312" key="12">
    <source>
        <dbReference type="EMBL" id="CCD70186.1"/>
    </source>
</evidence>
<evidence type="ECO:0000312" key="13">
    <source>
        <dbReference type="WormBase" id="F28F9.1"/>
    </source>
</evidence>
<proteinExistence type="evidence at transcript level"/>
<organism>
    <name type="scientific">Caenorhabditis elegans</name>
    <dbReference type="NCBI Taxonomy" id="6239"/>
    <lineage>
        <taxon>Eukaryota</taxon>
        <taxon>Metazoa</taxon>
        <taxon>Ecdysozoa</taxon>
        <taxon>Nematoda</taxon>
        <taxon>Chromadorea</taxon>
        <taxon>Rhabditida</taxon>
        <taxon>Rhabditina</taxon>
        <taxon>Rhabditomorpha</taxon>
        <taxon>Rhabditoidea</taxon>
        <taxon>Rhabditidae</taxon>
        <taxon>Peloderinae</taxon>
        <taxon>Caenorhabditis</taxon>
    </lineage>
</organism>